<name>RL21_LACH4</name>
<accession>A8YVX7</accession>
<comment type="function">
    <text evidence="1">This protein binds to 23S rRNA in the presence of protein L20.</text>
</comment>
<comment type="subunit">
    <text evidence="1">Part of the 50S ribosomal subunit. Contacts protein L20.</text>
</comment>
<comment type="similarity">
    <text evidence="1">Belongs to the bacterial ribosomal protein bL21 family.</text>
</comment>
<reference key="1">
    <citation type="journal article" date="2008" name="J. Bacteriol.">
        <title>Genome sequence of Lactobacillus helveticus: an organism distinguished by selective gene loss and IS element expansion.</title>
        <authorList>
            <person name="Callanan M."/>
            <person name="Kaleta P."/>
            <person name="O'Callaghan J."/>
            <person name="O'Sullivan O."/>
            <person name="Jordan K."/>
            <person name="McAuliffe O."/>
            <person name="Sangrador-Vegas A."/>
            <person name="Slattery L."/>
            <person name="Fitzgerald G.F."/>
            <person name="Beresford T."/>
            <person name="Ross R.P."/>
        </authorList>
    </citation>
    <scope>NUCLEOTIDE SEQUENCE [LARGE SCALE GENOMIC DNA]</scope>
    <source>
        <strain>DPC 4571</strain>
    </source>
</reference>
<sequence length="103" mass="11357">MYAIIKTGGKQYKVAEGDSVFVEKLDAEEGSSVTFDEVILVANGDDVKVGTPLVDGAKVTAKVEKQGKEKKVVTFKYKPKKHSHSKYGHRQPYTKVTVEKIEA</sequence>
<evidence type="ECO:0000255" key="1">
    <source>
        <dbReference type="HAMAP-Rule" id="MF_01363"/>
    </source>
</evidence>
<evidence type="ECO:0000305" key="2"/>
<proteinExistence type="inferred from homology"/>
<dbReference type="EMBL" id="CP000517">
    <property type="protein sequence ID" value="ABX27407.1"/>
    <property type="molecule type" value="Genomic_DNA"/>
</dbReference>
<dbReference type="RefSeq" id="WP_003627604.1">
    <property type="nucleotide sequence ID" value="NC_010080.1"/>
</dbReference>
<dbReference type="SMR" id="A8YVX7"/>
<dbReference type="GeneID" id="83724974"/>
<dbReference type="KEGG" id="lhe:lhv_1424"/>
<dbReference type="eggNOG" id="COG0261">
    <property type="taxonomic scope" value="Bacteria"/>
</dbReference>
<dbReference type="HOGENOM" id="CLU_061463_3_2_9"/>
<dbReference type="Proteomes" id="UP000000790">
    <property type="component" value="Chromosome"/>
</dbReference>
<dbReference type="GO" id="GO:0005737">
    <property type="term" value="C:cytoplasm"/>
    <property type="evidence" value="ECO:0007669"/>
    <property type="project" value="UniProtKB-ARBA"/>
</dbReference>
<dbReference type="GO" id="GO:1990904">
    <property type="term" value="C:ribonucleoprotein complex"/>
    <property type="evidence" value="ECO:0007669"/>
    <property type="project" value="UniProtKB-KW"/>
</dbReference>
<dbReference type="GO" id="GO:0005840">
    <property type="term" value="C:ribosome"/>
    <property type="evidence" value="ECO:0007669"/>
    <property type="project" value="UniProtKB-KW"/>
</dbReference>
<dbReference type="GO" id="GO:0019843">
    <property type="term" value="F:rRNA binding"/>
    <property type="evidence" value="ECO:0007669"/>
    <property type="project" value="UniProtKB-UniRule"/>
</dbReference>
<dbReference type="GO" id="GO:0003735">
    <property type="term" value="F:structural constituent of ribosome"/>
    <property type="evidence" value="ECO:0007669"/>
    <property type="project" value="InterPro"/>
</dbReference>
<dbReference type="GO" id="GO:0006412">
    <property type="term" value="P:translation"/>
    <property type="evidence" value="ECO:0007669"/>
    <property type="project" value="UniProtKB-UniRule"/>
</dbReference>
<dbReference type="HAMAP" id="MF_01363">
    <property type="entry name" value="Ribosomal_bL21"/>
    <property type="match status" value="1"/>
</dbReference>
<dbReference type="InterPro" id="IPR028909">
    <property type="entry name" value="bL21-like"/>
</dbReference>
<dbReference type="InterPro" id="IPR036164">
    <property type="entry name" value="bL21-like_sf"/>
</dbReference>
<dbReference type="InterPro" id="IPR001787">
    <property type="entry name" value="Ribosomal_bL21"/>
</dbReference>
<dbReference type="InterPro" id="IPR018258">
    <property type="entry name" value="Ribosomal_bL21_CS"/>
</dbReference>
<dbReference type="NCBIfam" id="TIGR00061">
    <property type="entry name" value="L21"/>
    <property type="match status" value="1"/>
</dbReference>
<dbReference type="PANTHER" id="PTHR21349">
    <property type="entry name" value="50S RIBOSOMAL PROTEIN L21"/>
    <property type="match status" value="1"/>
</dbReference>
<dbReference type="PANTHER" id="PTHR21349:SF0">
    <property type="entry name" value="LARGE RIBOSOMAL SUBUNIT PROTEIN BL21M"/>
    <property type="match status" value="1"/>
</dbReference>
<dbReference type="Pfam" id="PF00829">
    <property type="entry name" value="Ribosomal_L21p"/>
    <property type="match status" value="1"/>
</dbReference>
<dbReference type="SUPFAM" id="SSF141091">
    <property type="entry name" value="L21p-like"/>
    <property type="match status" value="1"/>
</dbReference>
<dbReference type="PROSITE" id="PS01169">
    <property type="entry name" value="RIBOSOMAL_L21"/>
    <property type="match status" value="1"/>
</dbReference>
<gene>
    <name evidence="1" type="primary">rplU</name>
    <name type="ordered locus">lhv_1424</name>
</gene>
<keyword id="KW-0687">Ribonucleoprotein</keyword>
<keyword id="KW-0689">Ribosomal protein</keyword>
<keyword id="KW-0694">RNA-binding</keyword>
<keyword id="KW-0699">rRNA-binding</keyword>
<organism>
    <name type="scientific">Lactobacillus helveticus (strain DPC 4571)</name>
    <dbReference type="NCBI Taxonomy" id="405566"/>
    <lineage>
        <taxon>Bacteria</taxon>
        <taxon>Bacillati</taxon>
        <taxon>Bacillota</taxon>
        <taxon>Bacilli</taxon>
        <taxon>Lactobacillales</taxon>
        <taxon>Lactobacillaceae</taxon>
        <taxon>Lactobacillus</taxon>
    </lineage>
</organism>
<feature type="chain" id="PRO_1000073387" description="Large ribosomal subunit protein bL21">
    <location>
        <begin position="1"/>
        <end position="103"/>
    </location>
</feature>
<protein>
    <recommendedName>
        <fullName evidence="1">Large ribosomal subunit protein bL21</fullName>
    </recommendedName>
    <alternativeName>
        <fullName evidence="2">50S ribosomal protein L21</fullName>
    </alternativeName>
</protein>